<reference key="1">
    <citation type="submission" date="2008-05" db="EMBL/GenBank/DDBJ databases">
        <title>Genome sequence of Clostridium botulinum Ba4 strain 657.</title>
        <authorList>
            <person name="Shrivastava S."/>
            <person name="Brown J.L."/>
            <person name="Bruce D."/>
            <person name="Detter C."/>
            <person name="Munk C."/>
            <person name="Smith L.A."/>
            <person name="Smith T.J."/>
            <person name="Sutton G."/>
            <person name="Brettin T.S."/>
        </authorList>
    </citation>
    <scope>NUCLEOTIDE SEQUENCE [LARGE SCALE GENOMIC DNA]</scope>
    <source>
        <strain>657 / Type Ba4</strain>
    </source>
</reference>
<organism>
    <name type="scientific">Clostridium botulinum (strain 657 / Type Ba4)</name>
    <dbReference type="NCBI Taxonomy" id="515621"/>
    <lineage>
        <taxon>Bacteria</taxon>
        <taxon>Bacillati</taxon>
        <taxon>Bacillota</taxon>
        <taxon>Clostridia</taxon>
        <taxon>Eubacteriales</taxon>
        <taxon>Clostridiaceae</taxon>
        <taxon>Clostridium</taxon>
    </lineage>
</organism>
<dbReference type="EMBL" id="CP001083">
    <property type="protein sequence ID" value="ACQ54538.1"/>
    <property type="molecule type" value="Genomic_DNA"/>
</dbReference>
<dbReference type="RefSeq" id="WP_003360194.1">
    <property type="nucleotide sequence ID" value="NC_012658.1"/>
</dbReference>
<dbReference type="SMR" id="C3KVP8"/>
<dbReference type="KEGG" id="cbi:CLJ_B3786"/>
<dbReference type="HOGENOM" id="CLU_036235_2_1_9"/>
<dbReference type="Proteomes" id="UP000002333">
    <property type="component" value="Chromosome"/>
</dbReference>
<dbReference type="GO" id="GO:0015934">
    <property type="term" value="C:large ribosomal subunit"/>
    <property type="evidence" value="ECO:0007669"/>
    <property type="project" value="InterPro"/>
</dbReference>
<dbReference type="GO" id="GO:0019843">
    <property type="term" value="F:rRNA binding"/>
    <property type="evidence" value="ECO:0007669"/>
    <property type="project" value="UniProtKB-UniRule"/>
</dbReference>
<dbReference type="GO" id="GO:0003735">
    <property type="term" value="F:structural constituent of ribosome"/>
    <property type="evidence" value="ECO:0007669"/>
    <property type="project" value="InterPro"/>
</dbReference>
<dbReference type="GO" id="GO:0016740">
    <property type="term" value="F:transferase activity"/>
    <property type="evidence" value="ECO:0007669"/>
    <property type="project" value="InterPro"/>
</dbReference>
<dbReference type="GO" id="GO:0002181">
    <property type="term" value="P:cytoplasmic translation"/>
    <property type="evidence" value="ECO:0007669"/>
    <property type="project" value="TreeGrafter"/>
</dbReference>
<dbReference type="FunFam" id="2.30.30.30:FF:000001">
    <property type="entry name" value="50S ribosomal protein L2"/>
    <property type="match status" value="1"/>
</dbReference>
<dbReference type="FunFam" id="2.40.50.140:FF:000003">
    <property type="entry name" value="50S ribosomal protein L2"/>
    <property type="match status" value="1"/>
</dbReference>
<dbReference type="FunFam" id="4.10.950.10:FF:000001">
    <property type="entry name" value="50S ribosomal protein L2"/>
    <property type="match status" value="1"/>
</dbReference>
<dbReference type="Gene3D" id="2.30.30.30">
    <property type="match status" value="1"/>
</dbReference>
<dbReference type="Gene3D" id="2.40.50.140">
    <property type="entry name" value="Nucleic acid-binding proteins"/>
    <property type="match status" value="1"/>
</dbReference>
<dbReference type="Gene3D" id="4.10.950.10">
    <property type="entry name" value="Ribosomal protein L2, domain 3"/>
    <property type="match status" value="1"/>
</dbReference>
<dbReference type="HAMAP" id="MF_01320_B">
    <property type="entry name" value="Ribosomal_uL2_B"/>
    <property type="match status" value="1"/>
</dbReference>
<dbReference type="InterPro" id="IPR012340">
    <property type="entry name" value="NA-bd_OB-fold"/>
</dbReference>
<dbReference type="InterPro" id="IPR014722">
    <property type="entry name" value="Rib_uL2_dom2"/>
</dbReference>
<dbReference type="InterPro" id="IPR002171">
    <property type="entry name" value="Ribosomal_uL2"/>
</dbReference>
<dbReference type="InterPro" id="IPR005880">
    <property type="entry name" value="Ribosomal_uL2_bac/org-type"/>
</dbReference>
<dbReference type="InterPro" id="IPR022669">
    <property type="entry name" value="Ribosomal_uL2_C"/>
</dbReference>
<dbReference type="InterPro" id="IPR022671">
    <property type="entry name" value="Ribosomal_uL2_CS"/>
</dbReference>
<dbReference type="InterPro" id="IPR014726">
    <property type="entry name" value="Ribosomal_uL2_dom3"/>
</dbReference>
<dbReference type="InterPro" id="IPR022666">
    <property type="entry name" value="Ribosomal_uL2_RNA-bd_dom"/>
</dbReference>
<dbReference type="InterPro" id="IPR008991">
    <property type="entry name" value="Translation_prot_SH3-like_sf"/>
</dbReference>
<dbReference type="NCBIfam" id="TIGR01171">
    <property type="entry name" value="rplB_bact"/>
    <property type="match status" value="1"/>
</dbReference>
<dbReference type="PANTHER" id="PTHR13691:SF5">
    <property type="entry name" value="LARGE RIBOSOMAL SUBUNIT PROTEIN UL2M"/>
    <property type="match status" value="1"/>
</dbReference>
<dbReference type="PANTHER" id="PTHR13691">
    <property type="entry name" value="RIBOSOMAL PROTEIN L2"/>
    <property type="match status" value="1"/>
</dbReference>
<dbReference type="Pfam" id="PF00181">
    <property type="entry name" value="Ribosomal_L2"/>
    <property type="match status" value="1"/>
</dbReference>
<dbReference type="Pfam" id="PF03947">
    <property type="entry name" value="Ribosomal_L2_C"/>
    <property type="match status" value="1"/>
</dbReference>
<dbReference type="PIRSF" id="PIRSF002158">
    <property type="entry name" value="Ribosomal_L2"/>
    <property type="match status" value="1"/>
</dbReference>
<dbReference type="SMART" id="SM01383">
    <property type="entry name" value="Ribosomal_L2"/>
    <property type="match status" value="1"/>
</dbReference>
<dbReference type="SMART" id="SM01382">
    <property type="entry name" value="Ribosomal_L2_C"/>
    <property type="match status" value="1"/>
</dbReference>
<dbReference type="SUPFAM" id="SSF50249">
    <property type="entry name" value="Nucleic acid-binding proteins"/>
    <property type="match status" value="1"/>
</dbReference>
<dbReference type="SUPFAM" id="SSF50104">
    <property type="entry name" value="Translation proteins SH3-like domain"/>
    <property type="match status" value="1"/>
</dbReference>
<dbReference type="PROSITE" id="PS00467">
    <property type="entry name" value="RIBOSOMAL_L2"/>
    <property type="match status" value="1"/>
</dbReference>
<evidence type="ECO:0000255" key="1">
    <source>
        <dbReference type="HAMAP-Rule" id="MF_01320"/>
    </source>
</evidence>
<evidence type="ECO:0000256" key="2">
    <source>
        <dbReference type="SAM" id="MobiDB-lite"/>
    </source>
</evidence>
<evidence type="ECO:0000305" key="3"/>
<name>RL2_CLOB6</name>
<gene>
    <name evidence="1" type="primary">rplB</name>
    <name type="ordered locus">CLJ_B3786</name>
</gene>
<sequence>MAVKGFRPTTPTRREMTMCTFEEITTSTPEKSLLVSLKKSGGRNANGKITVRHIGGGAKRKYRIIDFKRNKDNIPAKVVSIEYDPNRTAFIALVVYADGEKRYIIAPVGLKVGDTVVSGPESDIKVGNCLPIRNIPVGTVIHNIELAAGKGAQLVRSAGNSAQLMAKEGDYSQVRLPSGEVRYIRVECRATIGVVSNQTNEIVNIGKAGRKRHMGVRPTVRGSVMNPNDHPHGGGEGRSPIGHPSPRTPWGKPALGYKTRKNKKYSDRFIVKRRHDK</sequence>
<proteinExistence type="inferred from homology"/>
<protein>
    <recommendedName>
        <fullName evidence="1">Large ribosomal subunit protein uL2</fullName>
    </recommendedName>
    <alternativeName>
        <fullName evidence="3">50S ribosomal protein L2</fullName>
    </alternativeName>
</protein>
<keyword id="KW-0687">Ribonucleoprotein</keyword>
<keyword id="KW-0689">Ribosomal protein</keyword>
<keyword id="KW-0694">RNA-binding</keyword>
<keyword id="KW-0699">rRNA-binding</keyword>
<comment type="function">
    <text evidence="1">One of the primary rRNA binding proteins. Required for association of the 30S and 50S subunits to form the 70S ribosome, for tRNA binding and peptide bond formation. It has been suggested to have peptidyltransferase activity; this is somewhat controversial. Makes several contacts with the 16S rRNA in the 70S ribosome.</text>
</comment>
<comment type="subunit">
    <text evidence="1">Part of the 50S ribosomal subunit. Forms a bridge to the 30S subunit in the 70S ribosome.</text>
</comment>
<comment type="similarity">
    <text evidence="1">Belongs to the universal ribosomal protein uL2 family.</text>
</comment>
<feature type="chain" id="PRO_1000214439" description="Large ribosomal subunit protein uL2">
    <location>
        <begin position="1"/>
        <end position="277"/>
    </location>
</feature>
<feature type="region of interest" description="Disordered" evidence="2">
    <location>
        <begin position="219"/>
        <end position="277"/>
    </location>
</feature>
<accession>C3KVP8</accession>